<keyword id="KW-0535">Nitrogen fixation</keyword>
<keyword id="KW-0547">Nucleotide-binding</keyword>
<keyword id="KW-0597">Phosphoprotein</keyword>
<keyword id="KW-1185">Reference proteome</keyword>
<keyword id="KW-0804">Transcription</keyword>
<keyword id="KW-0805">Transcription regulation</keyword>
<dbReference type="EMBL" id="U50385">
    <property type="protein sequence ID" value="AAC44623.1"/>
    <property type="molecule type" value="Genomic_DNA"/>
</dbReference>
<dbReference type="EMBL" id="AL591688">
    <property type="protein sequence ID" value="CAC46218.1"/>
    <property type="molecule type" value="Genomic_DNA"/>
</dbReference>
<dbReference type="RefSeq" id="NP_385745.1">
    <property type="nucleotide sequence ID" value="NC_003047.1"/>
</dbReference>
<dbReference type="RefSeq" id="WP_003528058.1">
    <property type="nucleotide sequence ID" value="NC_003047.1"/>
</dbReference>
<dbReference type="SMR" id="Q52905"/>
<dbReference type="EnsemblBacteria" id="CAC46218">
    <property type="protein sequence ID" value="CAC46218"/>
    <property type="gene ID" value="SMc00947"/>
</dbReference>
<dbReference type="KEGG" id="sme:SMc00947"/>
<dbReference type="PATRIC" id="fig|266834.11.peg.3072"/>
<dbReference type="eggNOG" id="COG0347">
    <property type="taxonomic scope" value="Bacteria"/>
</dbReference>
<dbReference type="HOGENOM" id="CLU_082268_0_0_5"/>
<dbReference type="OrthoDB" id="9802729at2"/>
<dbReference type="Proteomes" id="UP000001976">
    <property type="component" value="Chromosome"/>
</dbReference>
<dbReference type="GO" id="GO:0005829">
    <property type="term" value="C:cytosol"/>
    <property type="evidence" value="ECO:0007669"/>
    <property type="project" value="TreeGrafter"/>
</dbReference>
<dbReference type="GO" id="GO:0005524">
    <property type="term" value="F:ATP binding"/>
    <property type="evidence" value="ECO:0007669"/>
    <property type="project" value="TreeGrafter"/>
</dbReference>
<dbReference type="GO" id="GO:0030234">
    <property type="term" value="F:enzyme regulator activity"/>
    <property type="evidence" value="ECO:0007669"/>
    <property type="project" value="InterPro"/>
</dbReference>
<dbReference type="GO" id="GO:0009399">
    <property type="term" value="P:nitrogen fixation"/>
    <property type="evidence" value="ECO:0007669"/>
    <property type="project" value="UniProtKB-KW"/>
</dbReference>
<dbReference type="GO" id="GO:0006808">
    <property type="term" value="P:regulation of nitrogen utilization"/>
    <property type="evidence" value="ECO:0007669"/>
    <property type="project" value="InterPro"/>
</dbReference>
<dbReference type="FunFam" id="3.30.70.120:FF:000001">
    <property type="entry name" value="Nitrogen regulatory protein P-II"/>
    <property type="match status" value="1"/>
</dbReference>
<dbReference type="Gene3D" id="3.30.70.120">
    <property type="match status" value="1"/>
</dbReference>
<dbReference type="InterPro" id="IPR002187">
    <property type="entry name" value="N-reg_PII"/>
</dbReference>
<dbReference type="InterPro" id="IPR011322">
    <property type="entry name" value="N-reg_PII-like_a/b"/>
</dbReference>
<dbReference type="InterPro" id="IPR015867">
    <property type="entry name" value="N-reg_PII/ATP_PRibTrfase_C"/>
</dbReference>
<dbReference type="InterPro" id="IPR017918">
    <property type="entry name" value="N-reg_PII_CS"/>
</dbReference>
<dbReference type="InterPro" id="IPR002332">
    <property type="entry name" value="N-reg_PII_urydylation_site"/>
</dbReference>
<dbReference type="PANTHER" id="PTHR30115">
    <property type="entry name" value="NITROGEN REGULATORY PROTEIN P-II"/>
    <property type="match status" value="1"/>
</dbReference>
<dbReference type="PANTHER" id="PTHR30115:SF11">
    <property type="entry name" value="NITROGEN REGULATORY PROTEIN P-II HOMOLOG"/>
    <property type="match status" value="1"/>
</dbReference>
<dbReference type="Pfam" id="PF00543">
    <property type="entry name" value="P-II"/>
    <property type="match status" value="1"/>
</dbReference>
<dbReference type="PIRSF" id="PIRSF039144">
    <property type="entry name" value="GlnB"/>
    <property type="match status" value="1"/>
</dbReference>
<dbReference type="PRINTS" id="PR00340">
    <property type="entry name" value="PIIGLNB"/>
</dbReference>
<dbReference type="SMART" id="SM00938">
    <property type="entry name" value="P-II"/>
    <property type="match status" value="1"/>
</dbReference>
<dbReference type="SUPFAM" id="SSF54913">
    <property type="entry name" value="GlnB-like"/>
    <property type="match status" value="1"/>
</dbReference>
<dbReference type="PROSITE" id="PS00638">
    <property type="entry name" value="PII_GLNB_CTER"/>
    <property type="match status" value="1"/>
</dbReference>
<dbReference type="PROSITE" id="PS51343">
    <property type="entry name" value="PII_GLNB_DOM"/>
    <property type="match status" value="1"/>
</dbReference>
<dbReference type="PROSITE" id="PS00496">
    <property type="entry name" value="PII_GLNB_UMP"/>
    <property type="match status" value="1"/>
</dbReference>
<feature type="chain" id="PRO_0000139785" description="Nitrogen regulatory protein P-II">
    <location>
        <begin position="1"/>
        <end position="112"/>
    </location>
</feature>
<feature type="modified residue" description="O-UMP-tyrosine" evidence="2">
    <location>
        <position position="51"/>
    </location>
</feature>
<proteinExistence type="inferred from homology"/>
<organism>
    <name type="scientific">Rhizobium meliloti (strain 1021)</name>
    <name type="common">Ensifer meliloti</name>
    <name type="synonym">Sinorhizobium meliloti</name>
    <dbReference type="NCBI Taxonomy" id="266834"/>
    <lineage>
        <taxon>Bacteria</taxon>
        <taxon>Pseudomonadati</taxon>
        <taxon>Pseudomonadota</taxon>
        <taxon>Alphaproteobacteria</taxon>
        <taxon>Hyphomicrobiales</taxon>
        <taxon>Rhizobiaceae</taxon>
        <taxon>Sinorhizobium/Ensifer group</taxon>
        <taxon>Sinorhizobium</taxon>
    </lineage>
</organism>
<accession>Q52905</accession>
<sequence length="112" mass="12281">MKKIEAIIKPFKLDEVKEALQEVGLQGITVTEAKGFGRQKGHTELYRGAEYVVDFLPKVKVEVVLADENAEAVIEAIRNAAQTGRIGDGKIFVSNVEEVIRIRTGETGLDAI</sequence>
<evidence type="ECO:0000250" key="1"/>
<evidence type="ECO:0000255" key="2">
    <source>
        <dbReference type="PROSITE-ProRule" id="PRU00675"/>
    </source>
</evidence>
<name>GLNB_RHIME</name>
<comment type="function">
    <text>In nitrogen-limiting conditions, when the ratio of Gln to 2-ketoglutarate decreases, P-II is uridylylated to P-II-UMP. P-II-UMP allows the deadenylation of glutamine synthetase (GS), thus activating the enzyme. Conversely, in nitrogen excess P-II is deuridylated and promotes the adenylation of GS. P-II indirectly controls the transcription of the GS gene (glnA). P-II prevents NR-II-catalyzed conversion of NR-I to NR-I-phosphate, the transcriptional activator of glnA. When P-II is uridylylated to P-II-UMP, these events are reversed.</text>
</comment>
<comment type="subunit">
    <text evidence="1">Homotrimer.</text>
</comment>
<comment type="similarity">
    <text evidence="2">Belongs to the P(II) protein family.</text>
</comment>
<protein>
    <recommendedName>
        <fullName>Nitrogen regulatory protein P-II</fullName>
    </recommendedName>
</protein>
<reference key="1">
    <citation type="journal article" date="1996" name="FEMS Microbiol. Lett.">
        <title>Symbiotic nitrogen fixation does not require adenylylation of glutamine synthetase I in Rhizobium meliloti.</title>
        <authorList>
            <person name="Arcondeguy T."/>
            <person name="Huez I."/>
            <person name="Fourment J."/>
            <person name="Kahn D."/>
        </authorList>
    </citation>
    <scope>NUCLEOTIDE SEQUENCE [GENOMIC DNA]</scope>
    <source>
        <strain>RCR2011 / SU47</strain>
    </source>
</reference>
<reference key="2">
    <citation type="journal article" date="2001" name="Proc. Natl. Acad. Sci. U.S.A.">
        <title>Analysis of the chromosome sequence of the legume symbiont Sinorhizobium meliloti strain 1021.</title>
        <authorList>
            <person name="Capela D."/>
            <person name="Barloy-Hubler F."/>
            <person name="Gouzy J."/>
            <person name="Bothe G."/>
            <person name="Ampe F."/>
            <person name="Batut J."/>
            <person name="Boistard P."/>
            <person name="Becker A."/>
            <person name="Boutry M."/>
            <person name="Cadieu E."/>
            <person name="Dreano S."/>
            <person name="Gloux S."/>
            <person name="Godrie T."/>
            <person name="Goffeau A."/>
            <person name="Kahn D."/>
            <person name="Kiss E."/>
            <person name="Lelaure V."/>
            <person name="Masuy D."/>
            <person name="Pohl T."/>
            <person name="Portetelle D."/>
            <person name="Puehler A."/>
            <person name="Purnelle B."/>
            <person name="Ramsperger U."/>
            <person name="Renard C."/>
            <person name="Thebault P."/>
            <person name="Vandenbol M."/>
            <person name="Weidner S."/>
            <person name="Galibert F."/>
        </authorList>
    </citation>
    <scope>NUCLEOTIDE SEQUENCE [LARGE SCALE GENOMIC DNA]</scope>
    <source>
        <strain>1021</strain>
    </source>
</reference>
<reference key="3">
    <citation type="journal article" date="2001" name="Science">
        <title>The composite genome of the legume symbiont Sinorhizobium meliloti.</title>
        <authorList>
            <person name="Galibert F."/>
            <person name="Finan T.M."/>
            <person name="Long S.R."/>
            <person name="Puehler A."/>
            <person name="Abola P."/>
            <person name="Ampe F."/>
            <person name="Barloy-Hubler F."/>
            <person name="Barnett M.J."/>
            <person name="Becker A."/>
            <person name="Boistard P."/>
            <person name="Bothe G."/>
            <person name="Boutry M."/>
            <person name="Bowser L."/>
            <person name="Buhrmester J."/>
            <person name="Cadieu E."/>
            <person name="Capela D."/>
            <person name="Chain P."/>
            <person name="Cowie A."/>
            <person name="Davis R.W."/>
            <person name="Dreano S."/>
            <person name="Federspiel N.A."/>
            <person name="Fisher R.F."/>
            <person name="Gloux S."/>
            <person name="Godrie T."/>
            <person name="Goffeau A."/>
            <person name="Golding B."/>
            <person name="Gouzy J."/>
            <person name="Gurjal M."/>
            <person name="Hernandez-Lucas I."/>
            <person name="Hong A."/>
            <person name="Huizar L."/>
            <person name="Hyman R.W."/>
            <person name="Jones T."/>
            <person name="Kahn D."/>
            <person name="Kahn M.L."/>
            <person name="Kalman S."/>
            <person name="Keating D.H."/>
            <person name="Kiss E."/>
            <person name="Komp C."/>
            <person name="Lelaure V."/>
            <person name="Masuy D."/>
            <person name="Palm C."/>
            <person name="Peck M.C."/>
            <person name="Pohl T.M."/>
            <person name="Portetelle D."/>
            <person name="Purnelle B."/>
            <person name="Ramsperger U."/>
            <person name="Surzycki R."/>
            <person name="Thebault P."/>
            <person name="Vandenbol M."/>
            <person name="Vorhoelter F.J."/>
            <person name="Weidner S."/>
            <person name="Wells D.H."/>
            <person name="Wong K."/>
            <person name="Yeh K.-C."/>
            <person name="Batut J."/>
        </authorList>
    </citation>
    <scope>NUCLEOTIDE SEQUENCE [LARGE SCALE GENOMIC DNA]</scope>
    <source>
        <strain>1021</strain>
    </source>
</reference>
<gene>
    <name type="primary">glnB</name>
    <name type="ordered locus">R01639</name>
    <name type="ORF">SMc00947</name>
</gene>